<organism>
    <name type="scientific">Thermococcus kodakarensis (strain ATCC BAA-918 / JCM 12380 / KOD1)</name>
    <name type="common">Pyrococcus kodakaraensis (strain KOD1)</name>
    <dbReference type="NCBI Taxonomy" id="69014"/>
    <lineage>
        <taxon>Archaea</taxon>
        <taxon>Methanobacteriati</taxon>
        <taxon>Methanobacteriota</taxon>
        <taxon>Thermococci</taxon>
        <taxon>Thermococcales</taxon>
        <taxon>Thermococcaceae</taxon>
        <taxon>Thermococcus</taxon>
    </lineage>
</organism>
<dbReference type="EC" id="2.7.1.-" evidence="1"/>
<dbReference type="EMBL" id="AP006878">
    <property type="protein sequence ID" value="BAD84491.1"/>
    <property type="molecule type" value="Genomic_DNA"/>
</dbReference>
<dbReference type="RefSeq" id="WP_011249257.1">
    <property type="nucleotide sequence ID" value="NC_006624.1"/>
</dbReference>
<dbReference type="SMR" id="Q5JFX3"/>
<dbReference type="STRING" id="69014.TK0302"/>
<dbReference type="EnsemblBacteria" id="BAD84491">
    <property type="protein sequence ID" value="BAD84491"/>
    <property type="gene ID" value="TK0302"/>
</dbReference>
<dbReference type="GeneID" id="78446803"/>
<dbReference type="KEGG" id="tko:TK0302"/>
<dbReference type="PATRIC" id="fig|69014.16.peg.301"/>
<dbReference type="eggNOG" id="arCOG04063">
    <property type="taxonomic scope" value="Archaea"/>
</dbReference>
<dbReference type="HOGENOM" id="CLU_052998_4_1_2"/>
<dbReference type="InParanoid" id="Q5JFX3"/>
<dbReference type="OrthoDB" id="24376at2157"/>
<dbReference type="PhylomeDB" id="Q5JFX3"/>
<dbReference type="Proteomes" id="UP000000536">
    <property type="component" value="Chromosome"/>
</dbReference>
<dbReference type="GO" id="GO:0003950">
    <property type="term" value="F:NAD+ poly-ADP-ribosyltransferase activity"/>
    <property type="evidence" value="ECO:0007669"/>
    <property type="project" value="InterPro"/>
</dbReference>
<dbReference type="GO" id="GO:0000215">
    <property type="term" value="F:tRNA 2'-phosphotransferase activity"/>
    <property type="evidence" value="ECO:0000318"/>
    <property type="project" value="GO_Central"/>
</dbReference>
<dbReference type="GO" id="GO:0006388">
    <property type="term" value="P:tRNA splicing, via endonucleolytic cleavage and ligation"/>
    <property type="evidence" value="ECO:0000318"/>
    <property type="project" value="GO_Central"/>
</dbReference>
<dbReference type="Gene3D" id="3.20.170.30">
    <property type="match status" value="1"/>
</dbReference>
<dbReference type="Gene3D" id="1.10.10.970">
    <property type="entry name" value="RNA 2'-phosphotransferase, Tpt1/KptA family, N-terminal domain"/>
    <property type="match status" value="1"/>
</dbReference>
<dbReference type="HAMAP" id="MF_00299">
    <property type="entry name" value="KptA"/>
    <property type="match status" value="1"/>
</dbReference>
<dbReference type="InterPro" id="IPR002745">
    <property type="entry name" value="Ptrans_KptA/Tpt1"/>
</dbReference>
<dbReference type="InterPro" id="IPR042081">
    <property type="entry name" value="RNA_2'-PTrans_C"/>
</dbReference>
<dbReference type="InterPro" id="IPR022928">
    <property type="entry name" value="RNA_2'-PTrans_KptA"/>
</dbReference>
<dbReference type="InterPro" id="IPR042080">
    <property type="entry name" value="RNA_2'-PTrans_N"/>
</dbReference>
<dbReference type="NCBIfam" id="NF002013">
    <property type="entry name" value="PRK00819.1-2"/>
    <property type="match status" value="1"/>
</dbReference>
<dbReference type="PANTHER" id="PTHR12684">
    <property type="entry name" value="PUTATIVE PHOSPHOTRANSFERASE"/>
    <property type="match status" value="1"/>
</dbReference>
<dbReference type="PANTHER" id="PTHR12684:SF2">
    <property type="entry name" value="TRNA 2'-PHOSPHOTRANSFERASE 1"/>
    <property type="match status" value="1"/>
</dbReference>
<dbReference type="Pfam" id="PF01885">
    <property type="entry name" value="PTS_2-RNA"/>
    <property type="match status" value="1"/>
</dbReference>
<dbReference type="SUPFAM" id="SSF56399">
    <property type="entry name" value="ADP-ribosylation"/>
    <property type="match status" value="1"/>
</dbReference>
<evidence type="ECO:0000255" key="1">
    <source>
        <dbReference type="HAMAP-Rule" id="MF_00299"/>
    </source>
</evidence>
<comment type="function">
    <text evidence="1">Removes the 2'-phosphate from RNA via an intermediate in which the phosphate is ADP-ribosylated by NAD followed by a presumed transesterification to release the RNA and generate ADP-ribose 1''-2''-cyclic phosphate (APPR&gt;P). May function as an ADP-ribosylase.</text>
</comment>
<comment type="similarity">
    <text evidence="1">Belongs to the KptA/TPT1 family.</text>
</comment>
<keyword id="KW-0520">NAD</keyword>
<keyword id="KW-1185">Reference proteome</keyword>
<keyword id="KW-0808">Transferase</keyword>
<proteinExistence type="inferred from homology"/>
<gene>
    <name evidence="1" type="primary">kptA</name>
    <name type="ordered locus">TK0302</name>
</gene>
<name>KPTA_THEKO</name>
<protein>
    <recommendedName>
        <fullName evidence="1">Probable RNA 2'-phosphotransferase</fullName>
        <ecNumber evidence="1">2.7.1.-</ecNumber>
    </recommendedName>
</protein>
<accession>Q5JFX3</accession>
<feature type="chain" id="PRO_0000157494" description="Probable RNA 2'-phosphotransferase">
    <location>
        <begin position="1"/>
        <end position="180"/>
    </location>
</feature>
<reference key="1">
    <citation type="journal article" date="2005" name="Genome Res.">
        <title>Complete genome sequence of the hyperthermophilic archaeon Thermococcus kodakaraensis KOD1 and comparison with Pyrococcus genomes.</title>
        <authorList>
            <person name="Fukui T."/>
            <person name="Atomi H."/>
            <person name="Kanai T."/>
            <person name="Matsumi R."/>
            <person name="Fujiwara S."/>
            <person name="Imanaka T."/>
        </authorList>
    </citation>
    <scope>NUCLEOTIDE SEQUENCE [LARGE SCALE GENOMIC DNA]</scope>
    <source>
        <strain>ATCC BAA-918 / JCM 12380 / KOD1</strain>
    </source>
</reference>
<sequence length="180" mass="20938">MKPERKRVSKLMAYILRHSPEEFGLRPDVEGFVSLNELVNALKTVYPEVTEEFVREIVENDPKGRYEIRGDRIRARYGHSFPVSLDHEEDTESRFLYHGTPRRNLPSILKEGLKPMKRQYVHVSTDKIEALETGRRHGREVVLLVIDAECLRKRGFKIYKAGKNVRIVERVPPDCITLAV</sequence>